<proteinExistence type="inferred from homology"/>
<protein>
    <recommendedName>
        <fullName evidence="1">Nucleoside diphosphate kinase</fullName>
        <shortName evidence="1">NDK</shortName>
        <shortName evidence="1">NDP kinase</shortName>
        <ecNumber evidence="1">2.7.4.6</ecNumber>
    </recommendedName>
    <alternativeName>
        <fullName evidence="1">Nucleoside-2-P kinase</fullName>
    </alternativeName>
</protein>
<gene>
    <name evidence="1" type="primary">ndk</name>
    <name type="ordered locus">BURPS668_2193</name>
</gene>
<sequence length="141" mass="15562">MALERTLSIIKPDAVAKNVIGQIYSRFENAGLKIVAARMAHLSRADAEKFYAVHAERPFFKDLVDFMISGPVMIQVLEGEDAILKNRDLMGATDPKKAEKGTIRADFADSIDANAVHGSDAPETARAEVAFFFPEMNVYSR</sequence>
<dbReference type="EC" id="2.7.4.6" evidence="1"/>
<dbReference type="EMBL" id="CP000570">
    <property type="protein sequence ID" value="ABN81438.1"/>
    <property type="molecule type" value="Genomic_DNA"/>
</dbReference>
<dbReference type="RefSeq" id="WP_004193561.1">
    <property type="nucleotide sequence ID" value="NC_009074.1"/>
</dbReference>
<dbReference type="SMR" id="A3NA57"/>
<dbReference type="GeneID" id="92979081"/>
<dbReference type="KEGG" id="bpd:BURPS668_2193"/>
<dbReference type="HOGENOM" id="CLU_060216_8_1_4"/>
<dbReference type="GO" id="GO:0005737">
    <property type="term" value="C:cytoplasm"/>
    <property type="evidence" value="ECO:0007669"/>
    <property type="project" value="UniProtKB-SubCell"/>
</dbReference>
<dbReference type="GO" id="GO:0005524">
    <property type="term" value="F:ATP binding"/>
    <property type="evidence" value="ECO:0007669"/>
    <property type="project" value="UniProtKB-UniRule"/>
</dbReference>
<dbReference type="GO" id="GO:0046872">
    <property type="term" value="F:metal ion binding"/>
    <property type="evidence" value="ECO:0007669"/>
    <property type="project" value="UniProtKB-KW"/>
</dbReference>
<dbReference type="GO" id="GO:0004550">
    <property type="term" value="F:nucleoside diphosphate kinase activity"/>
    <property type="evidence" value="ECO:0007669"/>
    <property type="project" value="UniProtKB-UniRule"/>
</dbReference>
<dbReference type="GO" id="GO:0006241">
    <property type="term" value="P:CTP biosynthetic process"/>
    <property type="evidence" value="ECO:0007669"/>
    <property type="project" value="UniProtKB-UniRule"/>
</dbReference>
<dbReference type="GO" id="GO:0006183">
    <property type="term" value="P:GTP biosynthetic process"/>
    <property type="evidence" value="ECO:0007669"/>
    <property type="project" value="UniProtKB-UniRule"/>
</dbReference>
<dbReference type="GO" id="GO:0006228">
    <property type="term" value="P:UTP biosynthetic process"/>
    <property type="evidence" value="ECO:0007669"/>
    <property type="project" value="UniProtKB-UniRule"/>
</dbReference>
<dbReference type="CDD" id="cd04413">
    <property type="entry name" value="NDPk_I"/>
    <property type="match status" value="1"/>
</dbReference>
<dbReference type="FunFam" id="3.30.70.141:FF:000001">
    <property type="entry name" value="Nucleoside diphosphate kinase"/>
    <property type="match status" value="1"/>
</dbReference>
<dbReference type="Gene3D" id="3.30.70.141">
    <property type="entry name" value="Nucleoside diphosphate kinase-like domain"/>
    <property type="match status" value="1"/>
</dbReference>
<dbReference type="HAMAP" id="MF_00451">
    <property type="entry name" value="NDP_kinase"/>
    <property type="match status" value="1"/>
</dbReference>
<dbReference type="InterPro" id="IPR034907">
    <property type="entry name" value="NDK-like_dom"/>
</dbReference>
<dbReference type="InterPro" id="IPR036850">
    <property type="entry name" value="NDK-like_dom_sf"/>
</dbReference>
<dbReference type="InterPro" id="IPR001564">
    <property type="entry name" value="Nucleoside_diP_kinase"/>
</dbReference>
<dbReference type="InterPro" id="IPR023005">
    <property type="entry name" value="Nucleoside_diP_kinase_AS"/>
</dbReference>
<dbReference type="NCBIfam" id="NF001908">
    <property type="entry name" value="PRK00668.1"/>
    <property type="match status" value="1"/>
</dbReference>
<dbReference type="PANTHER" id="PTHR46161">
    <property type="entry name" value="NUCLEOSIDE DIPHOSPHATE KINASE"/>
    <property type="match status" value="1"/>
</dbReference>
<dbReference type="PANTHER" id="PTHR46161:SF3">
    <property type="entry name" value="NUCLEOSIDE DIPHOSPHATE KINASE DDB_G0292928-RELATED"/>
    <property type="match status" value="1"/>
</dbReference>
<dbReference type="Pfam" id="PF00334">
    <property type="entry name" value="NDK"/>
    <property type="match status" value="1"/>
</dbReference>
<dbReference type="PRINTS" id="PR01243">
    <property type="entry name" value="NUCDPKINASE"/>
</dbReference>
<dbReference type="SMART" id="SM00562">
    <property type="entry name" value="NDK"/>
    <property type="match status" value="1"/>
</dbReference>
<dbReference type="SUPFAM" id="SSF54919">
    <property type="entry name" value="Nucleoside diphosphate kinase, NDK"/>
    <property type="match status" value="1"/>
</dbReference>
<dbReference type="PROSITE" id="PS00469">
    <property type="entry name" value="NDPK"/>
    <property type="match status" value="1"/>
</dbReference>
<dbReference type="PROSITE" id="PS51374">
    <property type="entry name" value="NDPK_LIKE"/>
    <property type="match status" value="1"/>
</dbReference>
<evidence type="ECO:0000255" key="1">
    <source>
        <dbReference type="HAMAP-Rule" id="MF_00451"/>
    </source>
</evidence>
<reference key="1">
    <citation type="journal article" date="2010" name="Genome Biol. Evol.">
        <title>Continuing evolution of Burkholderia mallei through genome reduction and large-scale rearrangements.</title>
        <authorList>
            <person name="Losada L."/>
            <person name="Ronning C.M."/>
            <person name="DeShazer D."/>
            <person name="Woods D."/>
            <person name="Fedorova N."/>
            <person name="Kim H.S."/>
            <person name="Shabalina S.A."/>
            <person name="Pearson T.R."/>
            <person name="Brinkac L."/>
            <person name="Tan P."/>
            <person name="Nandi T."/>
            <person name="Crabtree J."/>
            <person name="Badger J."/>
            <person name="Beckstrom-Sternberg S."/>
            <person name="Saqib M."/>
            <person name="Schutzer S.E."/>
            <person name="Keim P."/>
            <person name="Nierman W.C."/>
        </authorList>
    </citation>
    <scope>NUCLEOTIDE SEQUENCE [LARGE SCALE GENOMIC DNA]</scope>
    <source>
        <strain>668</strain>
    </source>
</reference>
<name>NDK_BURP6</name>
<accession>A3NA57</accession>
<comment type="function">
    <text evidence="1">Major role in the synthesis of nucleoside triphosphates other than ATP. The ATP gamma phosphate is transferred to the NDP beta phosphate via a ping-pong mechanism, using a phosphorylated active-site intermediate.</text>
</comment>
<comment type="catalytic activity">
    <reaction evidence="1">
        <text>a 2'-deoxyribonucleoside 5'-diphosphate + ATP = a 2'-deoxyribonucleoside 5'-triphosphate + ADP</text>
        <dbReference type="Rhea" id="RHEA:44640"/>
        <dbReference type="ChEBI" id="CHEBI:30616"/>
        <dbReference type="ChEBI" id="CHEBI:61560"/>
        <dbReference type="ChEBI" id="CHEBI:73316"/>
        <dbReference type="ChEBI" id="CHEBI:456216"/>
        <dbReference type="EC" id="2.7.4.6"/>
    </reaction>
</comment>
<comment type="catalytic activity">
    <reaction evidence="1">
        <text>a ribonucleoside 5'-diphosphate + ATP = a ribonucleoside 5'-triphosphate + ADP</text>
        <dbReference type="Rhea" id="RHEA:18113"/>
        <dbReference type="ChEBI" id="CHEBI:30616"/>
        <dbReference type="ChEBI" id="CHEBI:57930"/>
        <dbReference type="ChEBI" id="CHEBI:61557"/>
        <dbReference type="ChEBI" id="CHEBI:456216"/>
        <dbReference type="EC" id="2.7.4.6"/>
    </reaction>
</comment>
<comment type="cofactor">
    <cofactor evidence="1">
        <name>Mg(2+)</name>
        <dbReference type="ChEBI" id="CHEBI:18420"/>
    </cofactor>
</comment>
<comment type="subunit">
    <text evidence="1">Homotetramer.</text>
</comment>
<comment type="subcellular location">
    <subcellularLocation>
        <location evidence="1">Cytoplasm</location>
    </subcellularLocation>
</comment>
<comment type="similarity">
    <text evidence="1">Belongs to the NDK family.</text>
</comment>
<keyword id="KW-0067">ATP-binding</keyword>
<keyword id="KW-0963">Cytoplasm</keyword>
<keyword id="KW-0418">Kinase</keyword>
<keyword id="KW-0460">Magnesium</keyword>
<keyword id="KW-0479">Metal-binding</keyword>
<keyword id="KW-0546">Nucleotide metabolism</keyword>
<keyword id="KW-0547">Nucleotide-binding</keyword>
<keyword id="KW-0597">Phosphoprotein</keyword>
<keyword id="KW-0808">Transferase</keyword>
<feature type="chain" id="PRO_1000026218" description="Nucleoside diphosphate kinase">
    <location>
        <begin position="1"/>
        <end position="141"/>
    </location>
</feature>
<feature type="active site" description="Pros-phosphohistidine intermediate" evidence="1">
    <location>
        <position position="117"/>
    </location>
</feature>
<feature type="binding site" evidence="1">
    <location>
        <position position="11"/>
    </location>
    <ligand>
        <name>ATP</name>
        <dbReference type="ChEBI" id="CHEBI:30616"/>
    </ligand>
</feature>
<feature type="binding site" evidence="1">
    <location>
        <position position="59"/>
    </location>
    <ligand>
        <name>ATP</name>
        <dbReference type="ChEBI" id="CHEBI:30616"/>
    </ligand>
</feature>
<feature type="binding site" evidence="1">
    <location>
        <position position="87"/>
    </location>
    <ligand>
        <name>ATP</name>
        <dbReference type="ChEBI" id="CHEBI:30616"/>
    </ligand>
</feature>
<feature type="binding site" evidence="1">
    <location>
        <position position="93"/>
    </location>
    <ligand>
        <name>ATP</name>
        <dbReference type="ChEBI" id="CHEBI:30616"/>
    </ligand>
</feature>
<feature type="binding site" evidence="1">
    <location>
        <position position="104"/>
    </location>
    <ligand>
        <name>ATP</name>
        <dbReference type="ChEBI" id="CHEBI:30616"/>
    </ligand>
</feature>
<feature type="binding site" evidence="1">
    <location>
        <position position="114"/>
    </location>
    <ligand>
        <name>ATP</name>
        <dbReference type="ChEBI" id="CHEBI:30616"/>
    </ligand>
</feature>
<organism>
    <name type="scientific">Burkholderia pseudomallei (strain 668)</name>
    <dbReference type="NCBI Taxonomy" id="320373"/>
    <lineage>
        <taxon>Bacteria</taxon>
        <taxon>Pseudomonadati</taxon>
        <taxon>Pseudomonadota</taxon>
        <taxon>Betaproteobacteria</taxon>
        <taxon>Burkholderiales</taxon>
        <taxon>Burkholderiaceae</taxon>
        <taxon>Burkholderia</taxon>
        <taxon>pseudomallei group</taxon>
    </lineage>
</organism>